<dbReference type="EMBL" id="CP001213">
    <property type="protein sequence ID" value="ACL28614.1"/>
    <property type="molecule type" value="Genomic_DNA"/>
</dbReference>
<dbReference type="RefSeq" id="WP_004268475.1">
    <property type="nucleotide sequence ID" value="NC_011835.1"/>
</dbReference>
<dbReference type="SMR" id="B8DVW3"/>
<dbReference type="STRING" id="442563.BLA_0312"/>
<dbReference type="GeneID" id="29695222"/>
<dbReference type="KEGG" id="bla:BLA_0312"/>
<dbReference type="PATRIC" id="fig|442563.4.peg.334"/>
<dbReference type="HOGENOM" id="CLU_114845_0_0_11"/>
<dbReference type="Proteomes" id="UP000002456">
    <property type="component" value="Chromosome"/>
</dbReference>
<dbReference type="GO" id="GO:0010181">
    <property type="term" value="F:FMN binding"/>
    <property type="evidence" value="ECO:0007669"/>
    <property type="project" value="InterPro"/>
</dbReference>
<dbReference type="GO" id="GO:0036211">
    <property type="term" value="P:protein modification process"/>
    <property type="evidence" value="ECO:0007669"/>
    <property type="project" value="InterPro"/>
</dbReference>
<dbReference type="Gene3D" id="3.40.50.360">
    <property type="match status" value="1"/>
</dbReference>
<dbReference type="HAMAP" id="MF_00128">
    <property type="entry name" value="NrdI"/>
    <property type="match status" value="1"/>
</dbReference>
<dbReference type="InterPro" id="IPR029039">
    <property type="entry name" value="Flavoprotein-like_sf"/>
</dbReference>
<dbReference type="InterPro" id="IPR020852">
    <property type="entry name" value="RNR_Ib_NrdI_bac"/>
</dbReference>
<dbReference type="InterPro" id="IPR004465">
    <property type="entry name" value="RNR_NrdI"/>
</dbReference>
<dbReference type="NCBIfam" id="TIGR00333">
    <property type="entry name" value="nrdI"/>
    <property type="match status" value="1"/>
</dbReference>
<dbReference type="PANTHER" id="PTHR37297">
    <property type="entry name" value="PROTEIN NRDI"/>
    <property type="match status" value="1"/>
</dbReference>
<dbReference type="PANTHER" id="PTHR37297:SF1">
    <property type="entry name" value="PROTEIN NRDI"/>
    <property type="match status" value="1"/>
</dbReference>
<dbReference type="Pfam" id="PF07972">
    <property type="entry name" value="Flavodoxin_NdrI"/>
    <property type="match status" value="1"/>
</dbReference>
<dbReference type="PIRSF" id="PIRSF005087">
    <property type="entry name" value="NrdI"/>
    <property type="match status" value="1"/>
</dbReference>
<dbReference type="SUPFAM" id="SSF52218">
    <property type="entry name" value="Flavoproteins"/>
    <property type="match status" value="1"/>
</dbReference>
<name>NRDI_BIFA0</name>
<organism>
    <name type="scientific">Bifidobacterium animalis subsp. lactis (strain AD011)</name>
    <dbReference type="NCBI Taxonomy" id="442563"/>
    <lineage>
        <taxon>Bacteria</taxon>
        <taxon>Bacillati</taxon>
        <taxon>Actinomycetota</taxon>
        <taxon>Actinomycetes</taxon>
        <taxon>Bifidobacteriales</taxon>
        <taxon>Bifidobacteriaceae</taxon>
        <taxon>Bifidobacterium</taxon>
    </lineage>
</organism>
<accession>B8DVW3</accession>
<gene>
    <name evidence="1" type="primary">nrdI</name>
    <name type="ordered locus">BLA_0312</name>
</gene>
<comment type="function">
    <text evidence="1">Probably involved in ribonucleotide reductase function.</text>
</comment>
<comment type="similarity">
    <text evidence="1">Belongs to the NrdI family.</text>
</comment>
<feature type="chain" id="PRO_1000191753" description="Protein NrdI">
    <location>
        <begin position="1"/>
        <end position="141"/>
    </location>
</feature>
<sequence length="141" mass="15745">MSAVVYFSSASRNTERFVEHCDFPSCGVNVFRIPLQPNAAPLNVREPYIIIVPTYGGGDARKAVPPQVKRFLNDPANREWIRGVIASGNTNFGEAYAAAGPIISRKCHVPLMYRFELMGTREDVHAVREGVRRFFSDTPTD</sequence>
<protein>
    <recommendedName>
        <fullName evidence="1">Protein NrdI</fullName>
    </recommendedName>
</protein>
<reference key="1">
    <citation type="journal article" date="2009" name="J. Bacteriol.">
        <title>Genome sequence of the probiotic bacterium Bifidobacterium animalis subsp. lactis AD011.</title>
        <authorList>
            <person name="Kim J.F."/>
            <person name="Jeong H."/>
            <person name="Yu D.S."/>
            <person name="Choi S.-H."/>
            <person name="Hur C.-G."/>
            <person name="Park M.-S."/>
            <person name="Yoon S.H."/>
            <person name="Kim D.-W."/>
            <person name="Ji G.E."/>
            <person name="Park H.-S."/>
            <person name="Oh T.K."/>
        </authorList>
    </citation>
    <scope>NUCLEOTIDE SEQUENCE [LARGE SCALE GENOMIC DNA]</scope>
    <source>
        <strain>AD011</strain>
    </source>
</reference>
<keyword id="KW-1185">Reference proteome</keyword>
<evidence type="ECO:0000255" key="1">
    <source>
        <dbReference type="HAMAP-Rule" id="MF_00128"/>
    </source>
</evidence>
<proteinExistence type="inferred from homology"/>